<organism>
    <name type="scientific">Homo sapiens</name>
    <name type="common">Human</name>
    <dbReference type="NCBI Taxonomy" id="9606"/>
    <lineage>
        <taxon>Eukaryota</taxon>
        <taxon>Metazoa</taxon>
        <taxon>Chordata</taxon>
        <taxon>Craniata</taxon>
        <taxon>Vertebrata</taxon>
        <taxon>Euteleostomi</taxon>
        <taxon>Mammalia</taxon>
        <taxon>Eutheria</taxon>
        <taxon>Euarchontoglires</taxon>
        <taxon>Primates</taxon>
        <taxon>Haplorrhini</taxon>
        <taxon>Catarrhini</taxon>
        <taxon>Hominidae</taxon>
        <taxon>Homo</taxon>
    </lineage>
</organism>
<proteinExistence type="evidence at protein level"/>
<reference key="1">
    <citation type="submission" date="1998-12" db="EMBL/GenBank/DDBJ databases">
        <authorList>
            <person name="Xu Y.Y."/>
            <person name="Sun L.Z."/>
            <person name="Wu Q.Y."/>
            <person name="Liu Y.Q."/>
            <person name="Liu B."/>
            <person name="Zhao B."/>
            <person name="Wang X.Y."/>
            <person name="Song L."/>
            <person name="Ye J."/>
            <person name="Sheng H."/>
            <person name="Gao Y."/>
            <person name="Zhang C.L."/>
            <person name="Zhang J."/>
            <person name="Wei Y.J."/>
            <person name="Sun Y.H."/>
            <person name="Jiang Y.X."/>
            <person name="Zhao X.W."/>
            <person name="Liu S."/>
            <person name="Liu L.S."/>
            <person name="Ding J.F."/>
            <person name="Gao R.L."/>
            <person name="Qiang B.Q."/>
            <person name="Yuan J.G."/>
            <person name="Liew C.C."/>
            <person name="Zhao M.S."/>
            <person name="Hui R.T."/>
        </authorList>
    </citation>
    <scope>NUCLEOTIDE SEQUENCE [LARGE SCALE MRNA]</scope>
    <source>
        <tissue>Aorta</tissue>
    </source>
</reference>
<reference key="2">
    <citation type="journal article" date="2004" name="Nat. Genet.">
        <title>Complete sequencing and characterization of 21,243 full-length human cDNAs.</title>
        <authorList>
            <person name="Ota T."/>
            <person name="Suzuki Y."/>
            <person name="Nishikawa T."/>
            <person name="Otsuki T."/>
            <person name="Sugiyama T."/>
            <person name="Irie R."/>
            <person name="Wakamatsu A."/>
            <person name="Hayashi K."/>
            <person name="Sato H."/>
            <person name="Nagai K."/>
            <person name="Kimura K."/>
            <person name="Makita H."/>
            <person name="Sekine M."/>
            <person name="Obayashi M."/>
            <person name="Nishi T."/>
            <person name="Shibahara T."/>
            <person name="Tanaka T."/>
            <person name="Ishii S."/>
            <person name="Yamamoto J."/>
            <person name="Saito K."/>
            <person name="Kawai Y."/>
            <person name="Isono Y."/>
            <person name="Nakamura Y."/>
            <person name="Nagahari K."/>
            <person name="Murakami K."/>
            <person name="Yasuda T."/>
            <person name="Iwayanagi T."/>
            <person name="Wagatsuma M."/>
            <person name="Shiratori A."/>
            <person name="Sudo H."/>
            <person name="Hosoiri T."/>
            <person name="Kaku Y."/>
            <person name="Kodaira H."/>
            <person name="Kondo H."/>
            <person name="Sugawara M."/>
            <person name="Takahashi M."/>
            <person name="Kanda K."/>
            <person name="Yokoi T."/>
            <person name="Furuya T."/>
            <person name="Kikkawa E."/>
            <person name="Omura Y."/>
            <person name="Abe K."/>
            <person name="Kamihara K."/>
            <person name="Katsuta N."/>
            <person name="Sato K."/>
            <person name="Tanikawa M."/>
            <person name="Yamazaki M."/>
            <person name="Ninomiya K."/>
            <person name="Ishibashi T."/>
            <person name="Yamashita H."/>
            <person name="Murakawa K."/>
            <person name="Fujimori K."/>
            <person name="Tanai H."/>
            <person name="Kimata M."/>
            <person name="Watanabe M."/>
            <person name="Hiraoka S."/>
            <person name="Chiba Y."/>
            <person name="Ishida S."/>
            <person name="Ono Y."/>
            <person name="Takiguchi S."/>
            <person name="Watanabe S."/>
            <person name="Yosida M."/>
            <person name="Hotuta T."/>
            <person name="Kusano J."/>
            <person name="Kanehori K."/>
            <person name="Takahashi-Fujii A."/>
            <person name="Hara H."/>
            <person name="Tanase T.-O."/>
            <person name="Nomura Y."/>
            <person name="Togiya S."/>
            <person name="Komai F."/>
            <person name="Hara R."/>
            <person name="Takeuchi K."/>
            <person name="Arita M."/>
            <person name="Imose N."/>
            <person name="Musashino K."/>
            <person name="Yuuki H."/>
            <person name="Oshima A."/>
            <person name="Sasaki N."/>
            <person name="Aotsuka S."/>
            <person name="Yoshikawa Y."/>
            <person name="Matsunawa H."/>
            <person name="Ichihara T."/>
            <person name="Shiohata N."/>
            <person name="Sano S."/>
            <person name="Moriya S."/>
            <person name="Momiyama H."/>
            <person name="Satoh N."/>
            <person name="Takami S."/>
            <person name="Terashima Y."/>
            <person name="Suzuki O."/>
            <person name="Nakagawa S."/>
            <person name="Senoh A."/>
            <person name="Mizoguchi H."/>
            <person name="Goto Y."/>
            <person name="Shimizu F."/>
            <person name="Wakebe H."/>
            <person name="Hishigaki H."/>
            <person name="Watanabe T."/>
            <person name="Sugiyama A."/>
            <person name="Takemoto M."/>
            <person name="Kawakami B."/>
            <person name="Yamazaki M."/>
            <person name="Watanabe K."/>
            <person name="Kumagai A."/>
            <person name="Itakura S."/>
            <person name="Fukuzumi Y."/>
            <person name="Fujimori Y."/>
            <person name="Komiyama M."/>
            <person name="Tashiro H."/>
            <person name="Tanigami A."/>
            <person name="Fujiwara T."/>
            <person name="Ono T."/>
            <person name="Yamada K."/>
            <person name="Fujii Y."/>
            <person name="Ozaki K."/>
            <person name="Hirao M."/>
            <person name="Ohmori Y."/>
            <person name="Kawabata A."/>
            <person name="Hikiji T."/>
            <person name="Kobatake N."/>
            <person name="Inagaki H."/>
            <person name="Ikema Y."/>
            <person name="Okamoto S."/>
            <person name="Okitani R."/>
            <person name="Kawakami T."/>
            <person name="Noguchi S."/>
            <person name="Itoh T."/>
            <person name="Shigeta K."/>
            <person name="Senba T."/>
            <person name="Matsumura K."/>
            <person name="Nakajima Y."/>
            <person name="Mizuno T."/>
            <person name="Morinaga M."/>
            <person name="Sasaki M."/>
            <person name="Togashi T."/>
            <person name="Oyama M."/>
            <person name="Hata H."/>
            <person name="Watanabe M."/>
            <person name="Komatsu T."/>
            <person name="Mizushima-Sugano J."/>
            <person name="Satoh T."/>
            <person name="Shirai Y."/>
            <person name="Takahashi Y."/>
            <person name="Nakagawa K."/>
            <person name="Okumura K."/>
            <person name="Nagase T."/>
            <person name="Nomura N."/>
            <person name="Kikuchi H."/>
            <person name="Masuho Y."/>
            <person name="Yamashita R."/>
            <person name="Nakai K."/>
            <person name="Yada T."/>
            <person name="Nakamura Y."/>
            <person name="Ohara O."/>
            <person name="Isogai T."/>
            <person name="Sugano S."/>
        </authorList>
    </citation>
    <scope>NUCLEOTIDE SEQUENCE [LARGE SCALE MRNA]</scope>
    <source>
        <tissue>Brain</tissue>
        <tissue>Hippocampus</tissue>
    </source>
</reference>
<reference key="3">
    <citation type="submission" date="2005-09" db="EMBL/GenBank/DDBJ databases">
        <authorList>
            <person name="Mural R.J."/>
            <person name="Istrail S."/>
            <person name="Sutton G.G."/>
            <person name="Florea L."/>
            <person name="Halpern A.L."/>
            <person name="Mobarry C.M."/>
            <person name="Lippert R."/>
            <person name="Walenz B."/>
            <person name="Shatkay H."/>
            <person name="Dew I."/>
            <person name="Miller J.R."/>
            <person name="Flanigan M.J."/>
            <person name="Edwards N.J."/>
            <person name="Bolanos R."/>
            <person name="Fasulo D."/>
            <person name="Halldorsson B.V."/>
            <person name="Hannenhalli S."/>
            <person name="Turner R."/>
            <person name="Yooseph S."/>
            <person name="Lu F."/>
            <person name="Nusskern D.R."/>
            <person name="Shue B.C."/>
            <person name="Zheng X.H."/>
            <person name="Zhong F."/>
            <person name="Delcher A.L."/>
            <person name="Huson D.H."/>
            <person name="Kravitz S.A."/>
            <person name="Mouchard L."/>
            <person name="Reinert K."/>
            <person name="Remington K.A."/>
            <person name="Clark A.G."/>
            <person name="Waterman M.S."/>
            <person name="Eichler E.E."/>
            <person name="Adams M.D."/>
            <person name="Hunkapiller M.W."/>
            <person name="Myers E.W."/>
            <person name="Venter J.C."/>
        </authorList>
    </citation>
    <scope>NUCLEOTIDE SEQUENCE [LARGE SCALE GENOMIC DNA]</scope>
</reference>
<reference key="4">
    <citation type="journal article" date="2004" name="Genome Res.">
        <title>The status, quality, and expansion of the NIH full-length cDNA project: the Mammalian Gene Collection (MGC).</title>
        <authorList>
            <consortium name="The MGC Project Team"/>
        </authorList>
    </citation>
    <scope>NUCLEOTIDE SEQUENCE [LARGE SCALE MRNA]</scope>
    <source>
        <tissue>Brain cortex</tissue>
    </source>
</reference>
<reference key="5">
    <citation type="journal article" date="2007" name="Mol. Cell. Biochem.">
        <title>Differential subcellular localization and activity of kelch repeat proteins KLHDC1 and KLHDC2.</title>
        <authorList>
            <person name="Chin K.-T."/>
            <person name="Xu H.-T."/>
            <person name="Ching Y.-P."/>
            <person name="Jin D.-Y."/>
        </authorList>
    </citation>
    <scope>SUBCELLULAR LOCATION</scope>
    <scope>TISSUE SPECIFICITY</scope>
</reference>
<reference key="6">
    <citation type="journal article" date="2020" name="IScience">
        <title>Cul5-type ubiquitin ligase KLHDC1 contributes to the elimination of truncated SELENOS produced by failed UGA/Sec decoding.</title>
        <authorList>
            <person name="Okumura F."/>
            <person name="Fujiki Y."/>
            <person name="Oki N."/>
            <person name="Osaki K."/>
            <person name="Nishikimi A."/>
            <person name="Fukui Y."/>
            <person name="Nakatsukasa K."/>
            <person name="Kamura T."/>
        </authorList>
    </citation>
    <scope>FUNCTION</scope>
    <scope>PATHWAY</scope>
    <scope>IDENTIFICATION IN A E3 UBIQUITIN-PROTEIN LIGASE COMPLEX CONTAINING CUL5</scope>
    <scope>SUBCELLULAR LOCATION</scope>
    <scope>IDENTIFICATION BY MASS SPECTROMETRY</scope>
</reference>
<protein>
    <recommendedName>
        <fullName evidence="5">Kelch domain-containing protein 1</fullName>
    </recommendedName>
</protein>
<accession>Q8N7A1</accession>
<accession>B3KXD9</accession>
<accession>Q8WYI1</accession>
<keyword id="KW-0963">Cytoplasm</keyword>
<keyword id="KW-0880">Kelch repeat</keyword>
<keyword id="KW-1267">Proteomics identification</keyword>
<keyword id="KW-1185">Reference proteome</keyword>
<keyword id="KW-0677">Repeat</keyword>
<keyword id="KW-0833">Ubl conjugation pathway</keyword>
<evidence type="ECO:0000269" key="1">
    <source>
    </source>
</evidence>
<evidence type="ECO:0000269" key="2">
    <source>
    </source>
</evidence>
<evidence type="ECO:0000303" key="3">
    <source>
    </source>
</evidence>
<evidence type="ECO:0000303" key="4">
    <source ref="1"/>
</evidence>
<evidence type="ECO:0000305" key="5"/>
<evidence type="ECO:0000312" key="6">
    <source>
        <dbReference type="HGNC" id="HGNC:19836"/>
    </source>
</evidence>
<comment type="function">
    <text evidence="2">Substrate-recognition component of a Cul5-RING (CRL5) E3 ubiquitin-protein ligase complex of the DesCEND (destruction via C-end degrons) pathway, which recognizes a C-degron located at the extreme C terminus of target proteins, leading to their ubiquitination and degradation (PubMed:32200094). The C-degron recognized by the DesCEND pathway is usually a motif of less than ten residues and can be present in full-length proteins, truncated proteins or proteolytically cleaved forms (PubMed:32200094). The CRL5(KLHDC1) complex mediates ubiquitination and degradation of truncated SELENOS selenoprotein produced by failed UGA/Sec decoding, which ends with a glycine (PubMed:32200094).</text>
</comment>
<comment type="pathway">
    <text evidence="2">Protein modification; protein ubiquitination.</text>
</comment>
<comment type="subunit">
    <text evidence="2">Component of a CRL5 E3 ubiquitin-protein ligase complex, also named ECS (Elongin BC-CUL2/5-SOCS-box protein) complex, composed of CUL5, Elongin BC (ELOB and ELOC), RBX1 and substrate-specific adapter KLHDC1.</text>
</comment>
<comment type="subcellular location">
    <subcellularLocation>
        <location evidence="1 2">Cytoplasm</location>
        <location evidence="1 2">Cytosol</location>
    </subcellularLocation>
</comment>
<comment type="tissue specificity">
    <text evidence="1">Widely expressed, with high levels in skeletal muscle, pancreas and liver. Undetectable in peripheral blood leukocytes.</text>
</comment>
<feature type="chain" id="PRO_0000119126" description="Kelch domain-containing protein 1">
    <location>
        <begin position="1"/>
        <end position="406"/>
    </location>
</feature>
<feature type="repeat" description="Kelch 1">
    <location>
        <begin position="24"/>
        <end position="76"/>
    </location>
</feature>
<feature type="repeat" description="Kelch 2">
    <location>
        <begin position="80"/>
        <end position="134"/>
    </location>
</feature>
<feature type="repeat" description="Kelch 3">
    <location>
        <begin position="135"/>
        <end position="181"/>
    </location>
</feature>
<feature type="repeat" description="Kelch 4">
    <location>
        <begin position="208"/>
        <end position="258"/>
    </location>
</feature>
<feature type="repeat" description="Kelch 5">
    <location>
        <begin position="260"/>
        <end position="307"/>
    </location>
</feature>
<feature type="repeat" description="Kelch 6">
    <location>
        <begin position="311"/>
        <end position="361"/>
    </location>
</feature>
<feature type="sequence conflict" description="In Ref. 1; BAC05398." evidence="5" ref="1">
    <original>V</original>
    <variation>A</variation>
    <location>
        <position position="32"/>
    </location>
</feature>
<name>KLDC1_HUMAN</name>
<gene>
    <name evidence="3 6" type="primary">KLHDC1</name>
    <name evidence="4" type="ORF">MSTP025</name>
</gene>
<dbReference type="EMBL" id="AF111806">
    <property type="protein sequence ID" value="AAL39008.1"/>
    <property type="molecule type" value="mRNA"/>
</dbReference>
<dbReference type="EMBL" id="AK098735">
    <property type="protein sequence ID" value="BAC05398.1"/>
    <property type="molecule type" value="mRNA"/>
</dbReference>
<dbReference type="EMBL" id="AK127202">
    <property type="protein sequence ID" value="BAG54451.1"/>
    <property type="molecule type" value="mRNA"/>
</dbReference>
<dbReference type="EMBL" id="CH471078">
    <property type="protein sequence ID" value="EAW65753.1"/>
    <property type="molecule type" value="Genomic_DNA"/>
</dbReference>
<dbReference type="EMBL" id="BC101595">
    <property type="protein sequence ID" value="AAI01596.1"/>
    <property type="molecule type" value="mRNA"/>
</dbReference>
<dbReference type="EMBL" id="BC101597">
    <property type="protein sequence ID" value="AAI01598.1"/>
    <property type="molecule type" value="mRNA"/>
</dbReference>
<dbReference type="CCDS" id="CCDS9692.1"/>
<dbReference type="RefSeq" id="NP_751943.1">
    <property type="nucleotide sequence ID" value="NM_172193.3"/>
</dbReference>
<dbReference type="SMR" id="Q8N7A1"/>
<dbReference type="BioGRID" id="125794">
    <property type="interactions" value="3"/>
</dbReference>
<dbReference type="FunCoup" id="Q8N7A1">
    <property type="interactions" value="182"/>
</dbReference>
<dbReference type="IntAct" id="Q8N7A1">
    <property type="interactions" value="2"/>
</dbReference>
<dbReference type="STRING" id="9606.ENSP00000352282"/>
<dbReference type="GlyGen" id="Q8N7A1">
    <property type="glycosylation" value="1 site, 1 O-linked glycan (1 site)"/>
</dbReference>
<dbReference type="iPTMnet" id="Q8N7A1"/>
<dbReference type="PhosphoSitePlus" id="Q8N7A1"/>
<dbReference type="BioMuta" id="KLHDC1"/>
<dbReference type="DMDM" id="90110030"/>
<dbReference type="MassIVE" id="Q8N7A1"/>
<dbReference type="PaxDb" id="9606-ENSP00000352282"/>
<dbReference type="PeptideAtlas" id="Q8N7A1"/>
<dbReference type="Antibodypedia" id="10289">
    <property type="antibodies" value="85 antibodies from 16 providers"/>
</dbReference>
<dbReference type="DNASU" id="122773"/>
<dbReference type="Ensembl" id="ENST00000359332.7">
    <property type="protein sequence ID" value="ENSP00000352282.2"/>
    <property type="gene ID" value="ENSG00000197776.8"/>
</dbReference>
<dbReference type="GeneID" id="122773"/>
<dbReference type="KEGG" id="hsa:122773"/>
<dbReference type="MANE-Select" id="ENST00000359332.7">
    <property type="protein sequence ID" value="ENSP00000352282.2"/>
    <property type="RefSeq nucleotide sequence ID" value="NM_172193.3"/>
    <property type="RefSeq protein sequence ID" value="NP_751943.1"/>
</dbReference>
<dbReference type="UCSC" id="uc001www.3">
    <property type="organism name" value="human"/>
</dbReference>
<dbReference type="AGR" id="HGNC:19836"/>
<dbReference type="CTD" id="122773"/>
<dbReference type="DisGeNET" id="122773"/>
<dbReference type="GeneCards" id="KLHDC1"/>
<dbReference type="HGNC" id="HGNC:19836">
    <property type="gene designation" value="KLHDC1"/>
</dbReference>
<dbReference type="HPA" id="ENSG00000197776">
    <property type="expression patterns" value="Low tissue specificity"/>
</dbReference>
<dbReference type="MIM" id="611281">
    <property type="type" value="gene"/>
</dbReference>
<dbReference type="neXtProt" id="NX_Q8N7A1"/>
<dbReference type="OpenTargets" id="ENSG00000197776"/>
<dbReference type="PharmGKB" id="PA134938689"/>
<dbReference type="VEuPathDB" id="HostDB:ENSG00000197776"/>
<dbReference type="eggNOG" id="KOG0379">
    <property type="taxonomic scope" value="Eukaryota"/>
</dbReference>
<dbReference type="GeneTree" id="ENSGT00940000157509"/>
<dbReference type="HOGENOM" id="CLU_042804_0_0_1"/>
<dbReference type="InParanoid" id="Q8N7A1"/>
<dbReference type="OMA" id="KWILYHV"/>
<dbReference type="OrthoDB" id="10251809at2759"/>
<dbReference type="PAN-GO" id="Q8N7A1">
    <property type="GO annotations" value="0 GO annotations based on evolutionary models"/>
</dbReference>
<dbReference type="PhylomeDB" id="Q8N7A1"/>
<dbReference type="TreeFam" id="TF314081"/>
<dbReference type="PathwayCommons" id="Q8N7A1"/>
<dbReference type="SignaLink" id="Q8N7A1"/>
<dbReference type="UniPathway" id="UPA00143"/>
<dbReference type="BioGRID-ORCS" id="122773">
    <property type="hits" value="9 hits in 1146 CRISPR screens"/>
</dbReference>
<dbReference type="ChiTaRS" id="KLHDC1">
    <property type="organism name" value="human"/>
</dbReference>
<dbReference type="GenomeRNAi" id="122773"/>
<dbReference type="Pharos" id="Q8N7A1">
    <property type="development level" value="Tbio"/>
</dbReference>
<dbReference type="PRO" id="PR:Q8N7A1"/>
<dbReference type="Proteomes" id="UP000005640">
    <property type="component" value="Chromosome 14"/>
</dbReference>
<dbReference type="RNAct" id="Q8N7A1">
    <property type="molecule type" value="protein"/>
</dbReference>
<dbReference type="Bgee" id="ENSG00000197776">
    <property type="expression patterns" value="Expressed in calcaneal tendon and 168 other cell types or tissues"/>
</dbReference>
<dbReference type="ExpressionAtlas" id="Q8N7A1">
    <property type="expression patterns" value="baseline and differential"/>
</dbReference>
<dbReference type="GO" id="GO:0031466">
    <property type="term" value="C:Cul5-RING ubiquitin ligase complex"/>
    <property type="evidence" value="ECO:0000314"/>
    <property type="project" value="UniProtKB"/>
</dbReference>
<dbReference type="GO" id="GO:0005737">
    <property type="term" value="C:cytoplasm"/>
    <property type="evidence" value="ECO:0000314"/>
    <property type="project" value="UniProtKB"/>
</dbReference>
<dbReference type="GO" id="GO:0005829">
    <property type="term" value="C:cytosol"/>
    <property type="evidence" value="ECO:0000314"/>
    <property type="project" value="UniProtKB"/>
</dbReference>
<dbReference type="GO" id="GO:1990756">
    <property type="term" value="F:ubiquitin-like ligase-substrate adaptor activity"/>
    <property type="evidence" value="ECO:0000314"/>
    <property type="project" value="UniProtKB"/>
</dbReference>
<dbReference type="GO" id="GO:0016567">
    <property type="term" value="P:protein ubiquitination"/>
    <property type="evidence" value="ECO:0007669"/>
    <property type="project" value="UniProtKB-UniPathway"/>
</dbReference>
<dbReference type="GO" id="GO:0140627">
    <property type="term" value="P:ubiquitin-dependent protein catabolic process via the C-end degron rule pathway"/>
    <property type="evidence" value="ECO:0000314"/>
    <property type="project" value="UniProtKB"/>
</dbReference>
<dbReference type="FunFam" id="2.120.10.80:FF:000073">
    <property type="entry name" value="Kelch domain-containing protein 1"/>
    <property type="match status" value="1"/>
</dbReference>
<dbReference type="FunFam" id="2.120.10.80:FF:000012">
    <property type="entry name" value="Kelch domain-containing protein 2"/>
    <property type="match status" value="1"/>
</dbReference>
<dbReference type="Gene3D" id="2.120.10.80">
    <property type="entry name" value="Kelch-type beta propeller"/>
    <property type="match status" value="2"/>
</dbReference>
<dbReference type="InterPro" id="IPR015915">
    <property type="entry name" value="Kelch-typ_b-propeller"/>
</dbReference>
<dbReference type="PANTHER" id="PTHR46228">
    <property type="entry name" value="KELCH DOMAIN-CONTAINING PROTEIN"/>
    <property type="match status" value="1"/>
</dbReference>
<dbReference type="PANTHER" id="PTHR46228:SF1">
    <property type="entry name" value="KELCH DOMAIN-CONTAINING PROTEIN 1"/>
    <property type="match status" value="1"/>
</dbReference>
<dbReference type="Pfam" id="PF24681">
    <property type="entry name" value="Kelch_KLHDC2_KLHL20_DRC7"/>
    <property type="match status" value="1"/>
</dbReference>
<dbReference type="SUPFAM" id="SSF117281">
    <property type="entry name" value="Kelch motif"/>
    <property type="match status" value="2"/>
</dbReference>
<sequence length="406" mass="46720">MADSQLFCVAEERSGHCAVVDGNFLYVWGGYVSIEDNEVYLPNDEIWTYDIDSGLWRMHLMEGELPASMSGSCGACINGKLYIFGGYDDKGYSNRLYFVNLRTRDETYIWEKITDFEGQPPTPRDKLSCWVYKDRLIYFGGYGCRRHSELQDCFDVHDASWEEQIFWGWHNDVHIFDTKTQTWFQPEIKGGVPPQPRAAHTCAVLGNKGYIFGGRVLQTRMNDLHYLNLDTWTWSGRITINGESPKHRSWHTLTPIADDKLFLCGGLSADNIPLSDGWIHNVTTNCWKQLTHLPKTRPRLWHTACLGKENEIMVFGGSKDDLLALDTGHCNDLLIFQTQPYSLLRSCLDCIGKNSIMLESQISLLPPKLLQQVLKKITFWAAANHREEQRVQKEETENKYQWISSN</sequence>